<organism>
    <name type="scientific">Moorella thermoacetica (strain ATCC 39073 / JCM 9320)</name>
    <dbReference type="NCBI Taxonomy" id="264732"/>
    <lineage>
        <taxon>Bacteria</taxon>
        <taxon>Bacillati</taxon>
        <taxon>Bacillota</taxon>
        <taxon>Clostridia</taxon>
        <taxon>Moorellales</taxon>
        <taxon>Moorellaceae</taxon>
        <taxon>Moorella</taxon>
    </lineage>
</organism>
<feature type="chain" id="PRO_0000334772" description="Leucine--tRNA ligase">
    <location>
        <begin position="1"/>
        <end position="829"/>
    </location>
</feature>
<feature type="short sequence motif" description="'HIGH' region">
    <location>
        <begin position="42"/>
        <end position="52"/>
    </location>
</feature>
<feature type="short sequence motif" description="'KMSKS' region">
    <location>
        <begin position="582"/>
        <end position="586"/>
    </location>
</feature>
<feature type="binding site" evidence="1">
    <location>
        <position position="585"/>
    </location>
    <ligand>
        <name>ATP</name>
        <dbReference type="ChEBI" id="CHEBI:30616"/>
    </ligand>
</feature>
<comment type="catalytic activity">
    <reaction evidence="1">
        <text>tRNA(Leu) + L-leucine + ATP = L-leucyl-tRNA(Leu) + AMP + diphosphate</text>
        <dbReference type="Rhea" id="RHEA:11688"/>
        <dbReference type="Rhea" id="RHEA-COMP:9613"/>
        <dbReference type="Rhea" id="RHEA-COMP:9622"/>
        <dbReference type="ChEBI" id="CHEBI:30616"/>
        <dbReference type="ChEBI" id="CHEBI:33019"/>
        <dbReference type="ChEBI" id="CHEBI:57427"/>
        <dbReference type="ChEBI" id="CHEBI:78442"/>
        <dbReference type="ChEBI" id="CHEBI:78494"/>
        <dbReference type="ChEBI" id="CHEBI:456215"/>
        <dbReference type="EC" id="6.1.1.4"/>
    </reaction>
</comment>
<comment type="subcellular location">
    <subcellularLocation>
        <location evidence="1">Cytoplasm</location>
    </subcellularLocation>
</comment>
<comment type="similarity">
    <text evidence="1">Belongs to the class-I aminoacyl-tRNA synthetase family.</text>
</comment>
<accession>Q2RKZ1</accession>
<proteinExistence type="inferred from homology"/>
<dbReference type="EC" id="6.1.1.4" evidence="1"/>
<dbReference type="EMBL" id="CP000232">
    <property type="protein sequence ID" value="ABC18898.1"/>
    <property type="molecule type" value="Genomic_DNA"/>
</dbReference>
<dbReference type="RefSeq" id="YP_429441.1">
    <property type="nucleotide sequence ID" value="NC_007644.1"/>
</dbReference>
<dbReference type="SMR" id="Q2RKZ1"/>
<dbReference type="STRING" id="264732.Moth_0568"/>
<dbReference type="EnsemblBacteria" id="ABC18898">
    <property type="protein sequence ID" value="ABC18898"/>
    <property type="gene ID" value="Moth_0568"/>
</dbReference>
<dbReference type="KEGG" id="mta:Moth_0568"/>
<dbReference type="PATRIC" id="fig|264732.11.peg.611"/>
<dbReference type="eggNOG" id="COG0495">
    <property type="taxonomic scope" value="Bacteria"/>
</dbReference>
<dbReference type="HOGENOM" id="CLU_004427_0_0_9"/>
<dbReference type="OrthoDB" id="9810365at2"/>
<dbReference type="GO" id="GO:0005829">
    <property type="term" value="C:cytosol"/>
    <property type="evidence" value="ECO:0007669"/>
    <property type="project" value="TreeGrafter"/>
</dbReference>
<dbReference type="GO" id="GO:0002161">
    <property type="term" value="F:aminoacyl-tRNA deacylase activity"/>
    <property type="evidence" value="ECO:0007669"/>
    <property type="project" value="InterPro"/>
</dbReference>
<dbReference type="GO" id="GO:0005524">
    <property type="term" value="F:ATP binding"/>
    <property type="evidence" value="ECO:0007669"/>
    <property type="project" value="UniProtKB-UniRule"/>
</dbReference>
<dbReference type="GO" id="GO:0004823">
    <property type="term" value="F:leucine-tRNA ligase activity"/>
    <property type="evidence" value="ECO:0007669"/>
    <property type="project" value="UniProtKB-UniRule"/>
</dbReference>
<dbReference type="GO" id="GO:0006429">
    <property type="term" value="P:leucyl-tRNA aminoacylation"/>
    <property type="evidence" value="ECO:0007669"/>
    <property type="project" value="UniProtKB-UniRule"/>
</dbReference>
<dbReference type="CDD" id="cd07958">
    <property type="entry name" value="Anticodon_Ia_Leu_BEm"/>
    <property type="match status" value="1"/>
</dbReference>
<dbReference type="CDD" id="cd00812">
    <property type="entry name" value="LeuRS_core"/>
    <property type="match status" value="1"/>
</dbReference>
<dbReference type="FunFam" id="3.40.50.620:FF:000003">
    <property type="entry name" value="Leucine--tRNA ligase"/>
    <property type="match status" value="1"/>
</dbReference>
<dbReference type="FunFam" id="3.40.50.620:FF:000056">
    <property type="entry name" value="Leucine--tRNA ligase"/>
    <property type="match status" value="1"/>
</dbReference>
<dbReference type="FunFam" id="1.10.730.10:FF:000011">
    <property type="entry name" value="Leucine--tRNA ligase chloroplastic/mitochondrial"/>
    <property type="match status" value="1"/>
</dbReference>
<dbReference type="Gene3D" id="3.10.20.590">
    <property type="match status" value="1"/>
</dbReference>
<dbReference type="Gene3D" id="3.40.50.620">
    <property type="entry name" value="HUPs"/>
    <property type="match status" value="2"/>
</dbReference>
<dbReference type="Gene3D" id="1.10.730.10">
    <property type="entry name" value="Isoleucyl-tRNA Synthetase, Domain 1"/>
    <property type="match status" value="1"/>
</dbReference>
<dbReference type="HAMAP" id="MF_00049_B">
    <property type="entry name" value="Leu_tRNA_synth_B"/>
    <property type="match status" value="1"/>
</dbReference>
<dbReference type="InterPro" id="IPR001412">
    <property type="entry name" value="aa-tRNA-synth_I_CS"/>
</dbReference>
<dbReference type="InterPro" id="IPR002300">
    <property type="entry name" value="aa-tRNA-synth_Ia"/>
</dbReference>
<dbReference type="InterPro" id="IPR002302">
    <property type="entry name" value="Leu-tRNA-ligase"/>
</dbReference>
<dbReference type="InterPro" id="IPR025709">
    <property type="entry name" value="Leu_tRNA-synth_edit"/>
</dbReference>
<dbReference type="InterPro" id="IPR013155">
    <property type="entry name" value="M/V/L/I-tRNA-synth_anticd-bd"/>
</dbReference>
<dbReference type="InterPro" id="IPR015413">
    <property type="entry name" value="Methionyl/Leucyl_tRNA_Synth"/>
</dbReference>
<dbReference type="InterPro" id="IPR014729">
    <property type="entry name" value="Rossmann-like_a/b/a_fold"/>
</dbReference>
<dbReference type="InterPro" id="IPR009080">
    <property type="entry name" value="tRNAsynth_Ia_anticodon-bd"/>
</dbReference>
<dbReference type="InterPro" id="IPR009008">
    <property type="entry name" value="Val/Leu/Ile-tRNA-synth_edit"/>
</dbReference>
<dbReference type="NCBIfam" id="TIGR00396">
    <property type="entry name" value="leuS_bact"/>
    <property type="match status" value="1"/>
</dbReference>
<dbReference type="PANTHER" id="PTHR43740:SF2">
    <property type="entry name" value="LEUCINE--TRNA LIGASE, MITOCHONDRIAL"/>
    <property type="match status" value="1"/>
</dbReference>
<dbReference type="PANTHER" id="PTHR43740">
    <property type="entry name" value="LEUCYL-TRNA SYNTHETASE"/>
    <property type="match status" value="1"/>
</dbReference>
<dbReference type="Pfam" id="PF08264">
    <property type="entry name" value="Anticodon_1"/>
    <property type="match status" value="1"/>
</dbReference>
<dbReference type="Pfam" id="PF00133">
    <property type="entry name" value="tRNA-synt_1"/>
    <property type="match status" value="1"/>
</dbReference>
<dbReference type="Pfam" id="PF13603">
    <property type="entry name" value="tRNA-synt_1_2"/>
    <property type="match status" value="1"/>
</dbReference>
<dbReference type="Pfam" id="PF09334">
    <property type="entry name" value="tRNA-synt_1g"/>
    <property type="match status" value="1"/>
</dbReference>
<dbReference type="PRINTS" id="PR00985">
    <property type="entry name" value="TRNASYNTHLEU"/>
</dbReference>
<dbReference type="SUPFAM" id="SSF47323">
    <property type="entry name" value="Anticodon-binding domain of a subclass of class I aminoacyl-tRNA synthetases"/>
    <property type="match status" value="1"/>
</dbReference>
<dbReference type="SUPFAM" id="SSF52374">
    <property type="entry name" value="Nucleotidylyl transferase"/>
    <property type="match status" value="1"/>
</dbReference>
<dbReference type="SUPFAM" id="SSF50677">
    <property type="entry name" value="ValRS/IleRS/LeuRS editing domain"/>
    <property type="match status" value="1"/>
</dbReference>
<dbReference type="PROSITE" id="PS00178">
    <property type="entry name" value="AA_TRNA_LIGASE_I"/>
    <property type="match status" value="1"/>
</dbReference>
<gene>
    <name evidence="1" type="primary">leuS</name>
    <name type="ordered locus">Moth_0568</name>
</gene>
<keyword id="KW-0030">Aminoacyl-tRNA synthetase</keyword>
<keyword id="KW-0067">ATP-binding</keyword>
<keyword id="KW-0963">Cytoplasm</keyword>
<keyword id="KW-0436">Ligase</keyword>
<keyword id="KW-0547">Nucleotide-binding</keyword>
<keyword id="KW-0648">Protein biosynthesis</keyword>
<evidence type="ECO:0000255" key="1">
    <source>
        <dbReference type="HAMAP-Rule" id="MF_00049"/>
    </source>
</evidence>
<reference key="1">
    <citation type="journal article" date="2008" name="Environ. Microbiol.">
        <title>The complete genome sequence of Moorella thermoacetica (f. Clostridium thermoaceticum).</title>
        <authorList>
            <person name="Pierce E."/>
            <person name="Xie G."/>
            <person name="Barabote R.D."/>
            <person name="Saunders E."/>
            <person name="Han C.S."/>
            <person name="Detter J.C."/>
            <person name="Richardson P."/>
            <person name="Brettin T.S."/>
            <person name="Das A."/>
            <person name="Ljungdahl L.G."/>
            <person name="Ragsdale S.W."/>
        </authorList>
    </citation>
    <scope>NUCLEOTIDE SEQUENCE [LARGE SCALE GENOMIC DNA]</scope>
    <source>
        <strain>ATCC 39073 / JCM 9320</strain>
    </source>
</reference>
<protein>
    <recommendedName>
        <fullName evidence="1">Leucine--tRNA ligase</fullName>
        <ecNumber evidence="1">6.1.1.4</ecNumber>
    </recommendedName>
    <alternativeName>
        <fullName evidence="1">Leucyl-tRNA synthetase</fullName>
        <shortName evidence="1">LeuRS</shortName>
    </alternativeName>
</protein>
<name>SYL_MOOTA</name>
<sequence length="829" mass="94798">MEARYNFKEIEPKWQRRWEASDLYRVTEDPDKPKFYCLEMFPYPSGNLHMGHVRNYSIGDVVARVKRMRGYNVLHPMGWDAFGLPAENAAIHRGIPPAEWTWSNIANMRRQLHAMGISYDWDREVATCHPNYYRWTQWLFLQMYKHGLAYRKKAAVNWCPSCATVLANEQVVDGACERCHTPVMRKDLEQWFFRITDYADRLLEDLKKLPGWPDKVKIMQENWIGKSSGAEVVFRVEGSGEEIPVFTTRPDTLYGVTYLVLAPEHPLVEKLTAGTPYEGPVEEFVQAARYLSALDRTATEKEKEGLFTGAYAINPVNNERVPIWIANYVLMEYGTGAVMGVPAHDQRDFEFARKYDLPVKVVIRPASSELPAGELAAAYVEDGIMVNSGPFNGLPNREGIQKVTEYLESIGRGRARVNYRLRDWLISRQRYWGAPIPMIYCDQCGIVPVPEEDLPVILPEGVEFRPTGESPLTYCPEFVNTTCPRCGGPARRETDTMDTFVCSSWYFLRYTSPHSQDRAFERDKVDYWMNVDQYIGGVEHAILHLMYARFFTKALHDFGLVGVEEPFQNLLTQGMVLKDGSKMSKSKGNIVSPEEIINRYGADTARLFILFAAPPERDLEWSDQGVEGCYRFLNRVWRLVGSYADAVRRAGGSLEIRSHADRELWRLLHATIKKVTEDVEERFNFNTAISAIMELVNGCYRYQDTVPEEEQNLVLMGEVLRKLVTLLAPFAPHITEELWQGLGGQESVHRESWPQYDPEALVEEEITLVIQINGKVKDRMQVPAGLAREKIEELVLNRDKVAALLAGQQVVKVIVVPDKLVNVVARRAS</sequence>